<dbReference type="EC" id="2.3.1.275" evidence="1"/>
<dbReference type="EMBL" id="CP001131">
    <property type="protein sequence ID" value="ACG75529.1"/>
    <property type="molecule type" value="Genomic_DNA"/>
</dbReference>
<dbReference type="RefSeq" id="WP_012528280.1">
    <property type="nucleotide sequence ID" value="NC_011145.1"/>
</dbReference>
<dbReference type="SMR" id="B4UIV7"/>
<dbReference type="KEGG" id="ank:AnaeK_4326"/>
<dbReference type="HOGENOM" id="CLU_081254_1_0_7"/>
<dbReference type="OrthoDB" id="9777124at2"/>
<dbReference type="UniPathway" id="UPA00085"/>
<dbReference type="Proteomes" id="UP000001871">
    <property type="component" value="Chromosome"/>
</dbReference>
<dbReference type="GO" id="GO:0005886">
    <property type="term" value="C:plasma membrane"/>
    <property type="evidence" value="ECO:0007669"/>
    <property type="project" value="UniProtKB-SubCell"/>
</dbReference>
<dbReference type="GO" id="GO:0043772">
    <property type="term" value="F:acyl-phosphate glycerol-3-phosphate acyltransferase activity"/>
    <property type="evidence" value="ECO:0007669"/>
    <property type="project" value="UniProtKB-UniRule"/>
</dbReference>
<dbReference type="GO" id="GO:0008654">
    <property type="term" value="P:phospholipid biosynthetic process"/>
    <property type="evidence" value="ECO:0007669"/>
    <property type="project" value="UniProtKB-UniRule"/>
</dbReference>
<dbReference type="HAMAP" id="MF_01043">
    <property type="entry name" value="PlsY"/>
    <property type="match status" value="1"/>
</dbReference>
<dbReference type="InterPro" id="IPR003811">
    <property type="entry name" value="G3P_acylTferase_PlsY"/>
</dbReference>
<dbReference type="NCBIfam" id="TIGR00023">
    <property type="entry name" value="glycerol-3-phosphate 1-O-acyltransferase PlsY"/>
    <property type="match status" value="1"/>
</dbReference>
<dbReference type="PANTHER" id="PTHR30309:SF0">
    <property type="entry name" value="GLYCEROL-3-PHOSPHATE ACYLTRANSFERASE-RELATED"/>
    <property type="match status" value="1"/>
</dbReference>
<dbReference type="PANTHER" id="PTHR30309">
    <property type="entry name" value="INNER MEMBRANE PROTEIN YGIH"/>
    <property type="match status" value="1"/>
</dbReference>
<dbReference type="Pfam" id="PF02660">
    <property type="entry name" value="G3P_acyltransf"/>
    <property type="match status" value="1"/>
</dbReference>
<dbReference type="SMART" id="SM01207">
    <property type="entry name" value="G3P_acyltransf"/>
    <property type="match status" value="1"/>
</dbReference>
<reference key="1">
    <citation type="submission" date="2008-08" db="EMBL/GenBank/DDBJ databases">
        <title>Complete sequence of Anaeromyxobacter sp. K.</title>
        <authorList>
            <consortium name="US DOE Joint Genome Institute"/>
            <person name="Lucas S."/>
            <person name="Copeland A."/>
            <person name="Lapidus A."/>
            <person name="Glavina del Rio T."/>
            <person name="Dalin E."/>
            <person name="Tice H."/>
            <person name="Bruce D."/>
            <person name="Goodwin L."/>
            <person name="Pitluck S."/>
            <person name="Saunders E."/>
            <person name="Brettin T."/>
            <person name="Detter J.C."/>
            <person name="Han C."/>
            <person name="Larimer F."/>
            <person name="Land M."/>
            <person name="Hauser L."/>
            <person name="Kyrpides N."/>
            <person name="Ovchinnikiva G."/>
            <person name="Beliaev A."/>
        </authorList>
    </citation>
    <scope>NUCLEOTIDE SEQUENCE [LARGE SCALE GENOMIC DNA]</scope>
    <source>
        <strain>K</strain>
    </source>
</reference>
<accession>B4UIV7</accession>
<evidence type="ECO:0000255" key="1">
    <source>
        <dbReference type="HAMAP-Rule" id="MF_01043"/>
    </source>
</evidence>
<keyword id="KW-0997">Cell inner membrane</keyword>
<keyword id="KW-1003">Cell membrane</keyword>
<keyword id="KW-0444">Lipid biosynthesis</keyword>
<keyword id="KW-0443">Lipid metabolism</keyword>
<keyword id="KW-0472">Membrane</keyword>
<keyword id="KW-0594">Phospholipid biosynthesis</keyword>
<keyword id="KW-1208">Phospholipid metabolism</keyword>
<keyword id="KW-0808">Transferase</keyword>
<keyword id="KW-0812">Transmembrane</keyword>
<keyword id="KW-1133">Transmembrane helix</keyword>
<comment type="function">
    <text evidence="1">Catalyzes the transfer of an acyl group from acyl-phosphate (acyl-PO(4)) to glycerol-3-phosphate (G3P) to form lysophosphatidic acid (LPA). This enzyme utilizes acyl-phosphate as fatty acyl donor, but not acyl-CoA or acyl-ACP.</text>
</comment>
<comment type="catalytic activity">
    <reaction evidence="1">
        <text>an acyl phosphate + sn-glycerol 3-phosphate = a 1-acyl-sn-glycero-3-phosphate + phosphate</text>
        <dbReference type="Rhea" id="RHEA:34075"/>
        <dbReference type="ChEBI" id="CHEBI:43474"/>
        <dbReference type="ChEBI" id="CHEBI:57597"/>
        <dbReference type="ChEBI" id="CHEBI:57970"/>
        <dbReference type="ChEBI" id="CHEBI:59918"/>
        <dbReference type="EC" id="2.3.1.275"/>
    </reaction>
</comment>
<comment type="pathway">
    <text evidence="1">Lipid metabolism; phospholipid metabolism.</text>
</comment>
<comment type="subunit">
    <text evidence="1">Probably interacts with PlsX.</text>
</comment>
<comment type="subcellular location">
    <subcellularLocation>
        <location evidence="1">Cell inner membrane</location>
        <topology evidence="1">Multi-pass membrane protein</topology>
    </subcellularLocation>
</comment>
<comment type="similarity">
    <text evidence="1">Belongs to the PlsY family.</text>
</comment>
<gene>
    <name evidence="1" type="primary">plsY</name>
    <name type="ordered locus">AnaeK_4326</name>
</gene>
<feature type="chain" id="PRO_1000136063" description="Glycerol-3-phosphate acyltransferase">
    <location>
        <begin position="1"/>
        <end position="201"/>
    </location>
</feature>
<feature type="transmembrane region" description="Helical" evidence="1">
    <location>
        <begin position="5"/>
        <end position="25"/>
    </location>
</feature>
<feature type="transmembrane region" description="Helical" evidence="1">
    <location>
        <begin position="55"/>
        <end position="75"/>
    </location>
</feature>
<feature type="transmembrane region" description="Helical" evidence="1">
    <location>
        <begin position="88"/>
        <end position="108"/>
    </location>
</feature>
<feature type="transmembrane region" description="Helical" evidence="1">
    <location>
        <begin position="118"/>
        <end position="138"/>
    </location>
</feature>
<feature type="transmembrane region" description="Helical" evidence="1">
    <location>
        <begin position="164"/>
        <end position="184"/>
    </location>
</feature>
<organism>
    <name type="scientific">Anaeromyxobacter sp. (strain K)</name>
    <dbReference type="NCBI Taxonomy" id="447217"/>
    <lineage>
        <taxon>Bacteria</taxon>
        <taxon>Pseudomonadati</taxon>
        <taxon>Myxococcota</taxon>
        <taxon>Myxococcia</taxon>
        <taxon>Myxococcales</taxon>
        <taxon>Cystobacterineae</taxon>
        <taxon>Anaeromyxobacteraceae</taxon>
        <taxon>Anaeromyxobacter</taxon>
    </lineage>
</organism>
<protein>
    <recommendedName>
        <fullName evidence="1">Glycerol-3-phosphate acyltransferase</fullName>
    </recommendedName>
    <alternativeName>
        <fullName evidence="1">Acyl-PO4 G3P acyltransferase</fullName>
    </alternativeName>
    <alternativeName>
        <fullName evidence="1">Acyl-phosphate--glycerol-3-phosphate acyltransferase</fullName>
    </alternativeName>
    <alternativeName>
        <fullName evidence="1">G3P acyltransferase</fullName>
        <shortName evidence="1">GPAT</shortName>
        <ecNumber evidence="1">2.3.1.275</ecNumber>
    </alternativeName>
    <alternativeName>
        <fullName evidence="1">Lysophosphatidic acid synthase</fullName>
        <shortName evidence="1">LPA synthase</shortName>
    </alternativeName>
</protein>
<sequence>MSPDLLGALLVAAGYLAGSIPFGVVLGRLVLGVDVRTVGSGNIGATNVARAGGKKMGVLVLVLDAAKAIVPILVARRVLAGTPHAEVWVTAVAVAAFVGHLFPVWLGFKGGKGVATGLGIFAVLAPWAALAGLVGYAVAYGLTRISSVGSLTGTTLCAAGGFATYGPRHPISWAGLAIALLIFLRHRENIRRLVRGEEKKV</sequence>
<proteinExistence type="inferred from homology"/>
<name>PLSY_ANASK</name>